<evidence type="ECO:0000250" key="1"/>
<evidence type="ECO:0000255" key="2"/>
<evidence type="ECO:0000305" key="3"/>
<sequence length="162" mass="19123">MAFTFAAFCYMLTLVLCASLIFFIIWHIIAFDDLRTDFKDPIEQGNPSRARERIKNVERVCCLLRKLVVPEYCIHGLFCLMFMCAAEWVTLGLNIPLLFYHLWRYFHRPADGSEVMFDPVSIMNVDILNYCQKEAWCKLAFYLLSFFYYLYRVGATVRYVSA</sequence>
<gene>
    <name type="primary">cnih2</name>
</gene>
<dbReference type="EMBL" id="BC080068">
    <property type="protein sequence ID" value="AAH80068.1"/>
    <property type="molecule type" value="mRNA"/>
</dbReference>
<dbReference type="EMBL" id="BC092335">
    <property type="protein sequence ID" value="AAH92335.1"/>
    <property type="molecule type" value="mRNA"/>
</dbReference>
<dbReference type="RefSeq" id="NP_001087528.1">
    <property type="nucleotide sequence ID" value="NM_001094059.1"/>
</dbReference>
<dbReference type="SMR" id="Q68EY2"/>
<dbReference type="DNASU" id="447352"/>
<dbReference type="GeneID" id="447352"/>
<dbReference type="KEGG" id="xla:447352"/>
<dbReference type="AGR" id="Xenbase:XB-GENE-952880"/>
<dbReference type="CTD" id="447352"/>
<dbReference type="Xenbase" id="XB-GENE-952880">
    <property type="gene designation" value="cnih2.S"/>
</dbReference>
<dbReference type="OMA" id="ESWCKMG"/>
<dbReference type="OrthoDB" id="434393at2759"/>
<dbReference type="Proteomes" id="UP000186698">
    <property type="component" value="Chromosome 4S"/>
</dbReference>
<dbReference type="Bgee" id="447352">
    <property type="expression patterns" value="Expressed in brain and 3 other cell types or tissues"/>
</dbReference>
<dbReference type="GO" id="GO:0030425">
    <property type="term" value="C:dendrite"/>
    <property type="evidence" value="ECO:0000318"/>
    <property type="project" value="GO_Central"/>
</dbReference>
<dbReference type="GO" id="GO:0016020">
    <property type="term" value="C:membrane"/>
    <property type="evidence" value="ECO:0007669"/>
    <property type="project" value="UniProtKB-SubCell"/>
</dbReference>
<dbReference type="GO" id="GO:0045202">
    <property type="term" value="C:synapse"/>
    <property type="evidence" value="ECO:0000318"/>
    <property type="project" value="GO_Central"/>
</dbReference>
<dbReference type="GO" id="GO:0005102">
    <property type="term" value="F:signaling receptor binding"/>
    <property type="evidence" value="ECO:0000318"/>
    <property type="project" value="GO_Central"/>
</dbReference>
<dbReference type="GO" id="GO:0035249">
    <property type="term" value="P:synaptic transmission, glutamatergic"/>
    <property type="evidence" value="ECO:0000318"/>
    <property type="project" value="GO_Central"/>
</dbReference>
<dbReference type="GO" id="GO:0016192">
    <property type="term" value="P:vesicle-mediated transport"/>
    <property type="evidence" value="ECO:0007669"/>
    <property type="project" value="InterPro"/>
</dbReference>
<dbReference type="InterPro" id="IPR003377">
    <property type="entry name" value="Cornichon"/>
</dbReference>
<dbReference type="PANTHER" id="PTHR12290">
    <property type="entry name" value="CORNICHON-RELATED"/>
    <property type="match status" value="1"/>
</dbReference>
<dbReference type="Pfam" id="PF03311">
    <property type="entry name" value="Cornichon"/>
    <property type="match status" value="2"/>
</dbReference>
<dbReference type="SMART" id="SM01398">
    <property type="entry name" value="Cornichon"/>
    <property type="match status" value="1"/>
</dbReference>
<name>CNIH2_XENLA</name>
<organism>
    <name type="scientific">Xenopus laevis</name>
    <name type="common">African clawed frog</name>
    <dbReference type="NCBI Taxonomy" id="8355"/>
    <lineage>
        <taxon>Eukaryota</taxon>
        <taxon>Metazoa</taxon>
        <taxon>Chordata</taxon>
        <taxon>Craniata</taxon>
        <taxon>Vertebrata</taxon>
        <taxon>Euteleostomi</taxon>
        <taxon>Amphibia</taxon>
        <taxon>Batrachia</taxon>
        <taxon>Anura</taxon>
        <taxon>Pipoidea</taxon>
        <taxon>Pipidae</taxon>
        <taxon>Xenopodinae</taxon>
        <taxon>Xenopus</taxon>
        <taxon>Xenopus</taxon>
    </lineage>
</organism>
<feature type="chain" id="PRO_0000408976" description="Protein cornichon homolog 2">
    <location>
        <begin position="1"/>
        <end position="162"/>
    </location>
</feature>
<feature type="topological domain" description="Cytoplasmic" evidence="2">
    <location>
        <begin position="1"/>
        <end position="10"/>
    </location>
</feature>
<feature type="transmembrane region" description="Helical" evidence="2">
    <location>
        <begin position="11"/>
        <end position="31"/>
    </location>
</feature>
<feature type="topological domain" description="Lumenal" evidence="2">
    <location>
        <begin position="32"/>
        <end position="72"/>
    </location>
</feature>
<feature type="transmembrane region" description="Helical" evidence="2">
    <location>
        <begin position="73"/>
        <end position="93"/>
    </location>
</feature>
<feature type="topological domain" description="Cytoplasmic" evidence="2">
    <location>
        <begin position="94"/>
        <end position="138"/>
    </location>
</feature>
<feature type="transmembrane region" description="Helical" evidence="2">
    <location>
        <begin position="139"/>
        <end position="161"/>
    </location>
</feature>
<feature type="topological domain" description="Lumenal" evidence="2">
    <location>
        <position position="162"/>
    </location>
</feature>
<proteinExistence type="evidence at transcript level"/>
<protein>
    <recommendedName>
        <fullName>Protein cornichon homolog 2</fullName>
        <shortName>CNIH-2</shortName>
    </recommendedName>
    <alternativeName>
        <fullName>Cornichon family AMPA receptor auxiliary protein 2</fullName>
    </alternativeName>
</protein>
<reference key="1">
    <citation type="submission" date="2004-08" db="EMBL/GenBank/DDBJ databases">
        <authorList>
            <consortium name="NIH - Xenopus Gene Collection (XGC) project"/>
        </authorList>
    </citation>
    <scope>NUCLEOTIDE SEQUENCE [LARGE SCALE MRNA]</scope>
    <source>
        <tissue>Eye</tissue>
    </source>
</reference>
<keyword id="KW-0472">Membrane</keyword>
<keyword id="KW-1185">Reference proteome</keyword>
<keyword id="KW-0812">Transmembrane</keyword>
<keyword id="KW-1133">Transmembrane helix</keyword>
<accession>Q68EY2</accession>
<comment type="function">
    <text evidence="1">Regulates the trafficking and gating properties of AMPA-selective glutamate receptors (AMPARs).</text>
</comment>
<comment type="subcellular location">
    <subcellularLocation>
        <location evidence="3">Membrane</location>
        <topology evidence="3">Multi-pass membrane protein</topology>
    </subcellularLocation>
</comment>
<comment type="similarity">
    <text evidence="3">Belongs to the cornichon family.</text>
</comment>